<proteinExistence type="inferred from homology"/>
<reference key="1">
    <citation type="submission" date="2008-10" db="EMBL/GenBank/DDBJ databases">
        <title>Genome sequence of Bacillus anthracis str. CDC 684.</title>
        <authorList>
            <person name="Dodson R.J."/>
            <person name="Munk A.C."/>
            <person name="Brettin T."/>
            <person name="Bruce D."/>
            <person name="Detter C."/>
            <person name="Tapia R."/>
            <person name="Han C."/>
            <person name="Sutton G."/>
            <person name="Sims D."/>
        </authorList>
    </citation>
    <scope>NUCLEOTIDE SEQUENCE [LARGE SCALE GENOMIC DNA]</scope>
    <source>
        <strain>CDC 684 / NRRL 3495</strain>
    </source>
</reference>
<gene>
    <name evidence="1" type="primary">rplL</name>
    <name type="ordered locus">BAMEG_0116</name>
</gene>
<feature type="chain" id="PRO_1000195768" description="Large ribosomal subunit protein bL12">
    <location>
        <begin position="1"/>
        <end position="119"/>
    </location>
</feature>
<evidence type="ECO:0000255" key="1">
    <source>
        <dbReference type="HAMAP-Rule" id="MF_00368"/>
    </source>
</evidence>
<evidence type="ECO:0000305" key="2"/>
<protein>
    <recommendedName>
        <fullName evidence="1">Large ribosomal subunit protein bL12</fullName>
    </recommendedName>
    <alternativeName>
        <fullName evidence="2">50S ribosomal protein L7/L12</fullName>
    </alternativeName>
</protein>
<dbReference type="EMBL" id="CP001215">
    <property type="protein sequence ID" value="ACP12693.1"/>
    <property type="molecule type" value="Genomic_DNA"/>
</dbReference>
<dbReference type="RefSeq" id="WP_000159736.1">
    <property type="nucleotide sequence ID" value="NC_012581.1"/>
</dbReference>
<dbReference type="SMR" id="C3LJ72"/>
<dbReference type="GeneID" id="93010953"/>
<dbReference type="KEGG" id="bah:BAMEG_0116"/>
<dbReference type="HOGENOM" id="CLU_086499_3_2_9"/>
<dbReference type="GO" id="GO:0022625">
    <property type="term" value="C:cytosolic large ribosomal subunit"/>
    <property type="evidence" value="ECO:0007669"/>
    <property type="project" value="TreeGrafter"/>
</dbReference>
<dbReference type="GO" id="GO:0003729">
    <property type="term" value="F:mRNA binding"/>
    <property type="evidence" value="ECO:0007669"/>
    <property type="project" value="TreeGrafter"/>
</dbReference>
<dbReference type="GO" id="GO:0003735">
    <property type="term" value="F:structural constituent of ribosome"/>
    <property type="evidence" value="ECO:0007669"/>
    <property type="project" value="InterPro"/>
</dbReference>
<dbReference type="GO" id="GO:0006412">
    <property type="term" value="P:translation"/>
    <property type="evidence" value="ECO:0007669"/>
    <property type="project" value="UniProtKB-UniRule"/>
</dbReference>
<dbReference type="CDD" id="cd00387">
    <property type="entry name" value="Ribosomal_L7_L12"/>
    <property type="match status" value="1"/>
</dbReference>
<dbReference type="FunFam" id="1.20.5.710:FF:000002">
    <property type="entry name" value="50S ribosomal protein L7/L12"/>
    <property type="match status" value="1"/>
</dbReference>
<dbReference type="FunFam" id="3.30.1390.10:FF:000001">
    <property type="entry name" value="50S ribosomal protein L7/L12"/>
    <property type="match status" value="1"/>
</dbReference>
<dbReference type="Gene3D" id="3.30.1390.10">
    <property type="match status" value="1"/>
</dbReference>
<dbReference type="Gene3D" id="1.20.5.710">
    <property type="entry name" value="Single helix bin"/>
    <property type="match status" value="1"/>
</dbReference>
<dbReference type="HAMAP" id="MF_00368">
    <property type="entry name" value="Ribosomal_bL12"/>
    <property type="match status" value="1"/>
</dbReference>
<dbReference type="InterPro" id="IPR000206">
    <property type="entry name" value="Ribosomal_bL12"/>
</dbReference>
<dbReference type="InterPro" id="IPR013823">
    <property type="entry name" value="Ribosomal_bL12_C"/>
</dbReference>
<dbReference type="InterPro" id="IPR014719">
    <property type="entry name" value="Ribosomal_bL12_C/ClpS-like"/>
</dbReference>
<dbReference type="InterPro" id="IPR008932">
    <property type="entry name" value="Ribosomal_bL12_oligo"/>
</dbReference>
<dbReference type="InterPro" id="IPR036235">
    <property type="entry name" value="Ribosomal_bL12_oligo_N_sf"/>
</dbReference>
<dbReference type="NCBIfam" id="TIGR00855">
    <property type="entry name" value="L12"/>
    <property type="match status" value="1"/>
</dbReference>
<dbReference type="PANTHER" id="PTHR45987">
    <property type="entry name" value="39S RIBOSOMAL PROTEIN L12"/>
    <property type="match status" value="1"/>
</dbReference>
<dbReference type="PANTHER" id="PTHR45987:SF4">
    <property type="entry name" value="LARGE RIBOSOMAL SUBUNIT PROTEIN BL12M"/>
    <property type="match status" value="1"/>
</dbReference>
<dbReference type="Pfam" id="PF00542">
    <property type="entry name" value="Ribosomal_L12"/>
    <property type="match status" value="1"/>
</dbReference>
<dbReference type="Pfam" id="PF16320">
    <property type="entry name" value="Ribosomal_L12_N"/>
    <property type="match status" value="1"/>
</dbReference>
<dbReference type="SUPFAM" id="SSF54736">
    <property type="entry name" value="ClpS-like"/>
    <property type="match status" value="1"/>
</dbReference>
<dbReference type="SUPFAM" id="SSF48300">
    <property type="entry name" value="Ribosomal protein L7/12, oligomerisation (N-terminal) domain"/>
    <property type="match status" value="1"/>
</dbReference>
<keyword id="KW-0687">Ribonucleoprotein</keyword>
<keyword id="KW-0689">Ribosomal protein</keyword>
<sequence>MTKEQIIEAVKSMTVLELNDLVKAIEEEFGVTAAAPVAVAGGAGEAAAEKTEFDVELTSAGAQKIKVIKVVREITGLGLKEAKELVDNTPKVIKEAAAKEEAEEIKAKLEEVGAAVEVK</sequence>
<comment type="function">
    <text evidence="1">Forms part of the ribosomal stalk which helps the ribosome interact with GTP-bound translation factors. Is thus essential for accurate translation.</text>
</comment>
<comment type="subunit">
    <text evidence="1">Homodimer. Part of the ribosomal stalk of the 50S ribosomal subunit. Forms a multimeric L10(L12)X complex, where L10 forms an elongated spine to which 2 to 4 L12 dimers bind in a sequential fashion. Binds GTP-bound translation factors.</text>
</comment>
<comment type="similarity">
    <text evidence="1">Belongs to the bacterial ribosomal protein bL12 family.</text>
</comment>
<name>RL7_BACAC</name>
<accession>C3LJ72</accession>
<organism>
    <name type="scientific">Bacillus anthracis (strain CDC 684 / NRRL 3495)</name>
    <dbReference type="NCBI Taxonomy" id="568206"/>
    <lineage>
        <taxon>Bacteria</taxon>
        <taxon>Bacillati</taxon>
        <taxon>Bacillota</taxon>
        <taxon>Bacilli</taxon>
        <taxon>Bacillales</taxon>
        <taxon>Bacillaceae</taxon>
        <taxon>Bacillus</taxon>
        <taxon>Bacillus cereus group</taxon>
    </lineage>
</organism>